<evidence type="ECO:0000255" key="1">
    <source>
        <dbReference type="HAMAP-Rule" id="MF_00505"/>
    </source>
</evidence>
<protein>
    <recommendedName>
        <fullName evidence="1">Chaperone protein HtpG</fullName>
    </recommendedName>
    <alternativeName>
        <fullName evidence="1">Heat shock protein HtpG</fullName>
    </alternativeName>
    <alternativeName>
        <fullName evidence="1">High temperature protein G</fullName>
    </alternativeName>
</protein>
<accession>Q39SQ3</accession>
<reference key="1">
    <citation type="journal article" date="2009" name="BMC Microbiol.">
        <title>The genome sequence of Geobacter metallireducens: features of metabolism, physiology and regulation common and dissimilar to Geobacter sulfurreducens.</title>
        <authorList>
            <person name="Aklujkar M."/>
            <person name="Krushkal J."/>
            <person name="DiBartolo G."/>
            <person name="Lapidus A."/>
            <person name="Land M.L."/>
            <person name="Lovley D.R."/>
        </authorList>
    </citation>
    <scope>NUCLEOTIDE SEQUENCE [LARGE SCALE GENOMIC DNA]</scope>
    <source>
        <strain>ATCC 53774 / DSM 7210 / GS-15</strain>
    </source>
</reference>
<name>HTPG_GEOMG</name>
<feature type="chain" id="PRO_0000236995" description="Chaperone protein HtpG">
    <location>
        <begin position="1"/>
        <end position="650"/>
    </location>
</feature>
<feature type="region of interest" description="A; substrate-binding" evidence="1">
    <location>
        <begin position="1"/>
        <end position="349"/>
    </location>
</feature>
<feature type="region of interest" description="B" evidence="1">
    <location>
        <begin position="350"/>
        <end position="566"/>
    </location>
</feature>
<feature type="region of interest" description="C" evidence="1">
    <location>
        <begin position="567"/>
        <end position="650"/>
    </location>
</feature>
<proteinExistence type="inferred from homology"/>
<gene>
    <name evidence="1" type="primary">htpG</name>
    <name type="ordered locus">Gmet_2498</name>
</gene>
<sequence length="650" mass="74043">MTKTTKKFETEVQQLLDLVIHSLYSNKDIFLRELISNSSDAIDKVLFEAHQNAAVIEGEPEGKIKLIPDKEAGTITIRDNGVGMTMEEVEKNIGTIAHSGTKAFLANLKEQNVSEHPELIGQFGVGFYASFMVADRVTLVTRRAGQDKAAGVRWESTGDGTYTVEEAVKETRGTEITLHLKEEMKEYLDEWKIRSIVRKYSDYVQYPVVMDVTRTEVPKGVNGEEIEGAGTIEKTVEETLNSMKAIWARAKSEVTEEEYEEFYKHVSHDFEKPLKTIHYSAEGVSEFKALLYLPAHKPFDLFMPERKKGVQLYVRRVFITDSCEQLIPDYLRFVKGVVDSSDLPLNVSREILQEDVQIKRIQKSLVSKIISTLSEMREKEADDYLAFYKEFGQVLKEGVHFDYANREKLQDLLLFESTRTEAGKFTSLKEYVERMPAGQEEIYFITGTSRTALEQSPHLEIFRKKEYEVLFLTDPVDEWVVQGVTEYDGKKLKAVDRGDVIPATEEEKKEQEAKREEAFKQYGDLLSFVKEKLDARVKEVRLSSRLTDSACCLVADEHGLNANMERILRAMNQDVPESKRILELNPDHPLMQVMANLFARDKANPRLGDYCDLLYDQALLTEGSPISDPLRFTRLVAELMVADGKAAAGE</sequence>
<comment type="function">
    <text evidence="1">Molecular chaperone. Has ATPase activity.</text>
</comment>
<comment type="subunit">
    <text evidence="1">Homodimer.</text>
</comment>
<comment type="subcellular location">
    <subcellularLocation>
        <location evidence="1">Cytoplasm</location>
    </subcellularLocation>
</comment>
<comment type="similarity">
    <text evidence="1">Belongs to the heat shock protein 90 family.</text>
</comment>
<keyword id="KW-0067">ATP-binding</keyword>
<keyword id="KW-0143">Chaperone</keyword>
<keyword id="KW-0963">Cytoplasm</keyword>
<keyword id="KW-0547">Nucleotide-binding</keyword>
<keyword id="KW-1185">Reference proteome</keyword>
<keyword id="KW-0346">Stress response</keyword>
<organism>
    <name type="scientific">Geobacter metallireducens (strain ATCC 53774 / DSM 7210 / GS-15)</name>
    <dbReference type="NCBI Taxonomy" id="269799"/>
    <lineage>
        <taxon>Bacteria</taxon>
        <taxon>Pseudomonadati</taxon>
        <taxon>Thermodesulfobacteriota</taxon>
        <taxon>Desulfuromonadia</taxon>
        <taxon>Geobacterales</taxon>
        <taxon>Geobacteraceae</taxon>
        <taxon>Geobacter</taxon>
    </lineage>
</organism>
<dbReference type="EMBL" id="CP000148">
    <property type="protein sequence ID" value="ABB32721.1"/>
    <property type="molecule type" value="Genomic_DNA"/>
</dbReference>
<dbReference type="RefSeq" id="WP_004514648.1">
    <property type="nucleotide sequence ID" value="NC_007517.1"/>
</dbReference>
<dbReference type="SMR" id="Q39SQ3"/>
<dbReference type="STRING" id="269799.Gmet_2498"/>
<dbReference type="KEGG" id="gme:Gmet_2498"/>
<dbReference type="eggNOG" id="COG0326">
    <property type="taxonomic scope" value="Bacteria"/>
</dbReference>
<dbReference type="HOGENOM" id="CLU_006684_3_0_7"/>
<dbReference type="Proteomes" id="UP000007073">
    <property type="component" value="Chromosome"/>
</dbReference>
<dbReference type="GO" id="GO:0005737">
    <property type="term" value="C:cytoplasm"/>
    <property type="evidence" value="ECO:0007669"/>
    <property type="project" value="UniProtKB-SubCell"/>
</dbReference>
<dbReference type="GO" id="GO:0005524">
    <property type="term" value="F:ATP binding"/>
    <property type="evidence" value="ECO:0007669"/>
    <property type="project" value="UniProtKB-UniRule"/>
</dbReference>
<dbReference type="GO" id="GO:0016887">
    <property type="term" value="F:ATP hydrolysis activity"/>
    <property type="evidence" value="ECO:0007669"/>
    <property type="project" value="InterPro"/>
</dbReference>
<dbReference type="GO" id="GO:0140662">
    <property type="term" value="F:ATP-dependent protein folding chaperone"/>
    <property type="evidence" value="ECO:0007669"/>
    <property type="project" value="InterPro"/>
</dbReference>
<dbReference type="GO" id="GO:0051082">
    <property type="term" value="F:unfolded protein binding"/>
    <property type="evidence" value="ECO:0007669"/>
    <property type="project" value="UniProtKB-UniRule"/>
</dbReference>
<dbReference type="CDD" id="cd16927">
    <property type="entry name" value="HATPase_Hsp90-like"/>
    <property type="match status" value="1"/>
</dbReference>
<dbReference type="FunFam" id="1.20.120.790:FF:000006">
    <property type="entry name" value="Chaperone protein HtpG"/>
    <property type="match status" value="1"/>
</dbReference>
<dbReference type="FunFam" id="3.30.230.80:FF:000002">
    <property type="entry name" value="Molecular chaperone HtpG"/>
    <property type="match status" value="1"/>
</dbReference>
<dbReference type="FunFam" id="3.30.565.10:FF:000009">
    <property type="entry name" value="Molecular chaperone HtpG"/>
    <property type="match status" value="1"/>
</dbReference>
<dbReference type="Gene3D" id="3.30.230.80">
    <property type="match status" value="1"/>
</dbReference>
<dbReference type="Gene3D" id="3.40.50.11260">
    <property type="match status" value="1"/>
</dbReference>
<dbReference type="Gene3D" id="1.20.120.790">
    <property type="entry name" value="Heat shock protein 90, C-terminal domain"/>
    <property type="match status" value="1"/>
</dbReference>
<dbReference type="Gene3D" id="3.30.565.10">
    <property type="entry name" value="Histidine kinase-like ATPase, C-terminal domain"/>
    <property type="match status" value="1"/>
</dbReference>
<dbReference type="HAMAP" id="MF_00505">
    <property type="entry name" value="HSP90"/>
    <property type="match status" value="1"/>
</dbReference>
<dbReference type="InterPro" id="IPR036890">
    <property type="entry name" value="HATPase_C_sf"/>
</dbReference>
<dbReference type="InterPro" id="IPR019805">
    <property type="entry name" value="Heat_shock_protein_90_CS"/>
</dbReference>
<dbReference type="InterPro" id="IPR037196">
    <property type="entry name" value="HSP90_C"/>
</dbReference>
<dbReference type="InterPro" id="IPR001404">
    <property type="entry name" value="Hsp90_fam"/>
</dbReference>
<dbReference type="InterPro" id="IPR020575">
    <property type="entry name" value="Hsp90_N"/>
</dbReference>
<dbReference type="InterPro" id="IPR020568">
    <property type="entry name" value="Ribosomal_Su5_D2-typ_SF"/>
</dbReference>
<dbReference type="NCBIfam" id="NF003555">
    <property type="entry name" value="PRK05218.1"/>
    <property type="match status" value="1"/>
</dbReference>
<dbReference type="PANTHER" id="PTHR11528">
    <property type="entry name" value="HEAT SHOCK PROTEIN 90 FAMILY MEMBER"/>
    <property type="match status" value="1"/>
</dbReference>
<dbReference type="Pfam" id="PF13589">
    <property type="entry name" value="HATPase_c_3"/>
    <property type="match status" value="1"/>
</dbReference>
<dbReference type="Pfam" id="PF00183">
    <property type="entry name" value="HSP90"/>
    <property type="match status" value="1"/>
</dbReference>
<dbReference type="PIRSF" id="PIRSF002583">
    <property type="entry name" value="Hsp90"/>
    <property type="match status" value="1"/>
</dbReference>
<dbReference type="PRINTS" id="PR00775">
    <property type="entry name" value="HEATSHOCK90"/>
</dbReference>
<dbReference type="SMART" id="SM00387">
    <property type="entry name" value="HATPase_c"/>
    <property type="match status" value="1"/>
</dbReference>
<dbReference type="SUPFAM" id="SSF55874">
    <property type="entry name" value="ATPase domain of HSP90 chaperone/DNA topoisomerase II/histidine kinase"/>
    <property type="match status" value="1"/>
</dbReference>
<dbReference type="SUPFAM" id="SSF110942">
    <property type="entry name" value="HSP90 C-terminal domain"/>
    <property type="match status" value="1"/>
</dbReference>
<dbReference type="SUPFAM" id="SSF54211">
    <property type="entry name" value="Ribosomal protein S5 domain 2-like"/>
    <property type="match status" value="1"/>
</dbReference>
<dbReference type="PROSITE" id="PS00298">
    <property type="entry name" value="HSP90"/>
    <property type="match status" value="1"/>
</dbReference>